<proteinExistence type="inferred from homology"/>
<organism>
    <name type="scientific">Roseiflexus sp. (strain RS-1)</name>
    <dbReference type="NCBI Taxonomy" id="357808"/>
    <lineage>
        <taxon>Bacteria</taxon>
        <taxon>Bacillati</taxon>
        <taxon>Chloroflexota</taxon>
        <taxon>Chloroflexia</taxon>
        <taxon>Chloroflexales</taxon>
        <taxon>Roseiflexineae</taxon>
        <taxon>Roseiflexaceae</taxon>
        <taxon>Roseiflexus</taxon>
    </lineage>
</organism>
<evidence type="ECO:0000250" key="1"/>
<evidence type="ECO:0000255" key="2">
    <source>
        <dbReference type="HAMAP-Rule" id="MF_00118"/>
    </source>
</evidence>
<reference key="1">
    <citation type="submission" date="2007-04" db="EMBL/GenBank/DDBJ databases">
        <title>Complete sequence of Roseiflexus sp. RS-1.</title>
        <authorList>
            <consortium name="US DOE Joint Genome Institute"/>
            <person name="Copeland A."/>
            <person name="Lucas S."/>
            <person name="Lapidus A."/>
            <person name="Barry K."/>
            <person name="Detter J.C."/>
            <person name="Glavina del Rio T."/>
            <person name="Hammon N."/>
            <person name="Israni S."/>
            <person name="Dalin E."/>
            <person name="Tice H."/>
            <person name="Pitluck S."/>
            <person name="Chertkov O."/>
            <person name="Brettin T."/>
            <person name="Bruce D."/>
            <person name="Han C."/>
            <person name="Schmutz J."/>
            <person name="Larimer F."/>
            <person name="Land M."/>
            <person name="Hauser L."/>
            <person name="Kyrpides N."/>
            <person name="Mikhailova N."/>
            <person name="Bryant D.A."/>
            <person name="Richardson P."/>
        </authorList>
    </citation>
    <scope>NUCLEOTIDE SEQUENCE [LARGE SCALE GENOMIC DNA]</scope>
    <source>
        <strain>RS-1</strain>
    </source>
</reference>
<accession>A5UYI1</accession>
<gene>
    <name evidence="2" type="primary">tuf2</name>
    <name type="ordered locus">RoseRS_3323</name>
</gene>
<dbReference type="EC" id="3.6.5.3" evidence="2"/>
<dbReference type="EMBL" id="CP000686">
    <property type="protein sequence ID" value="ABQ91684.1"/>
    <property type="molecule type" value="Genomic_DNA"/>
</dbReference>
<dbReference type="RefSeq" id="WP_011958027.1">
    <property type="nucleotide sequence ID" value="NC_009523.1"/>
</dbReference>
<dbReference type="SMR" id="A5UYI1"/>
<dbReference type="STRING" id="357808.RoseRS_3323"/>
<dbReference type="KEGG" id="rrs:RoseRS_3323"/>
<dbReference type="eggNOG" id="COG0050">
    <property type="taxonomic scope" value="Bacteria"/>
</dbReference>
<dbReference type="HOGENOM" id="CLU_007265_0_1_0"/>
<dbReference type="OrthoDB" id="9804504at2"/>
<dbReference type="Proteomes" id="UP000006554">
    <property type="component" value="Chromosome"/>
</dbReference>
<dbReference type="GO" id="GO:0005829">
    <property type="term" value="C:cytosol"/>
    <property type="evidence" value="ECO:0007669"/>
    <property type="project" value="TreeGrafter"/>
</dbReference>
<dbReference type="GO" id="GO:0005525">
    <property type="term" value="F:GTP binding"/>
    <property type="evidence" value="ECO:0007669"/>
    <property type="project" value="UniProtKB-UniRule"/>
</dbReference>
<dbReference type="GO" id="GO:0003924">
    <property type="term" value="F:GTPase activity"/>
    <property type="evidence" value="ECO:0007669"/>
    <property type="project" value="InterPro"/>
</dbReference>
<dbReference type="GO" id="GO:0003746">
    <property type="term" value="F:translation elongation factor activity"/>
    <property type="evidence" value="ECO:0007669"/>
    <property type="project" value="UniProtKB-UniRule"/>
</dbReference>
<dbReference type="CDD" id="cd01884">
    <property type="entry name" value="EF_Tu"/>
    <property type="match status" value="1"/>
</dbReference>
<dbReference type="CDD" id="cd03697">
    <property type="entry name" value="EFTU_II"/>
    <property type="match status" value="1"/>
</dbReference>
<dbReference type="CDD" id="cd03707">
    <property type="entry name" value="EFTU_III"/>
    <property type="match status" value="1"/>
</dbReference>
<dbReference type="FunFam" id="2.40.30.10:FF:000001">
    <property type="entry name" value="Elongation factor Tu"/>
    <property type="match status" value="1"/>
</dbReference>
<dbReference type="FunFam" id="3.40.50.300:FF:000003">
    <property type="entry name" value="Elongation factor Tu"/>
    <property type="match status" value="1"/>
</dbReference>
<dbReference type="Gene3D" id="3.40.50.300">
    <property type="entry name" value="P-loop containing nucleotide triphosphate hydrolases"/>
    <property type="match status" value="1"/>
</dbReference>
<dbReference type="Gene3D" id="2.40.30.10">
    <property type="entry name" value="Translation factors"/>
    <property type="match status" value="2"/>
</dbReference>
<dbReference type="HAMAP" id="MF_00118_B">
    <property type="entry name" value="EF_Tu_B"/>
    <property type="match status" value="1"/>
</dbReference>
<dbReference type="InterPro" id="IPR041709">
    <property type="entry name" value="EF-Tu_GTP-bd"/>
</dbReference>
<dbReference type="InterPro" id="IPR050055">
    <property type="entry name" value="EF-Tu_GTPase"/>
</dbReference>
<dbReference type="InterPro" id="IPR004161">
    <property type="entry name" value="EFTu-like_2"/>
</dbReference>
<dbReference type="InterPro" id="IPR033720">
    <property type="entry name" value="EFTU_2"/>
</dbReference>
<dbReference type="InterPro" id="IPR031157">
    <property type="entry name" value="G_TR_CS"/>
</dbReference>
<dbReference type="InterPro" id="IPR027417">
    <property type="entry name" value="P-loop_NTPase"/>
</dbReference>
<dbReference type="InterPro" id="IPR005225">
    <property type="entry name" value="Small_GTP-bd"/>
</dbReference>
<dbReference type="InterPro" id="IPR000795">
    <property type="entry name" value="T_Tr_GTP-bd_dom"/>
</dbReference>
<dbReference type="InterPro" id="IPR009000">
    <property type="entry name" value="Transl_B-barrel_sf"/>
</dbReference>
<dbReference type="InterPro" id="IPR009001">
    <property type="entry name" value="Transl_elong_EF1A/Init_IF2_C"/>
</dbReference>
<dbReference type="InterPro" id="IPR004541">
    <property type="entry name" value="Transl_elong_EFTu/EF1A_bac/org"/>
</dbReference>
<dbReference type="InterPro" id="IPR004160">
    <property type="entry name" value="Transl_elong_EFTu/EF1A_C"/>
</dbReference>
<dbReference type="NCBIfam" id="TIGR00485">
    <property type="entry name" value="EF-Tu"/>
    <property type="match status" value="1"/>
</dbReference>
<dbReference type="NCBIfam" id="NF000766">
    <property type="entry name" value="PRK00049.1"/>
    <property type="match status" value="1"/>
</dbReference>
<dbReference type="NCBIfam" id="NF009372">
    <property type="entry name" value="PRK12735.1"/>
    <property type="match status" value="1"/>
</dbReference>
<dbReference type="NCBIfam" id="NF009373">
    <property type="entry name" value="PRK12736.1"/>
    <property type="match status" value="1"/>
</dbReference>
<dbReference type="NCBIfam" id="TIGR00231">
    <property type="entry name" value="small_GTP"/>
    <property type="match status" value="1"/>
</dbReference>
<dbReference type="PANTHER" id="PTHR43721:SF22">
    <property type="entry name" value="ELONGATION FACTOR TU, MITOCHONDRIAL"/>
    <property type="match status" value="1"/>
</dbReference>
<dbReference type="PANTHER" id="PTHR43721">
    <property type="entry name" value="ELONGATION FACTOR TU-RELATED"/>
    <property type="match status" value="1"/>
</dbReference>
<dbReference type="Pfam" id="PF00009">
    <property type="entry name" value="GTP_EFTU"/>
    <property type="match status" value="1"/>
</dbReference>
<dbReference type="Pfam" id="PF03144">
    <property type="entry name" value="GTP_EFTU_D2"/>
    <property type="match status" value="1"/>
</dbReference>
<dbReference type="Pfam" id="PF03143">
    <property type="entry name" value="GTP_EFTU_D3"/>
    <property type="match status" value="1"/>
</dbReference>
<dbReference type="PRINTS" id="PR00315">
    <property type="entry name" value="ELONGATNFCT"/>
</dbReference>
<dbReference type="SUPFAM" id="SSF50465">
    <property type="entry name" value="EF-Tu/eEF-1alpha/eIF2-gamma C-terminal domain"/>
    <property type="match status" value="1"/>
</dbReference>
<dbReference type="SUPFAM" id="SSF52540">
    <property type="entry name" value="P-loop containing nucleoside triphosphate hydrolases"/>
    <property type="match status" value="1"/>
</dbReference>
<dbReference type="SUPFAM" id="SSF50447">
    <property type="entry name" value="Translation proteins"/>
    <property type="match status" value="1"/>
</dbReference>
<dbReference type="PROSITE" id="PS00301">
    <property type="entry name" value="G_TR_1"/>
    <property type="match status" value="1"/>
</dbReference>
<dbReference type="PROSITE" id="PS51722">
    <property type="entry name" value="G_TR_2"/>
    <property type="match status" value="1"/>
</dbReference>
<keyword id="KW-0963">Cytoplasm</keyword>
<keyword id="KW-0251">Elongation factor</keyword>
<keyword id="KW-0342">GTP-binding</keyword>
<keyword id="KW-0378">Hydrolase</keyword>
<keyword id="KW-0460">Magnesium</keyword>
<keyword id="KW-0479">Metal-binding</keyword>
<keyword id="KW-0547">Nucleotide-binding</keyword>
<keyword id="KW-0648">Protein biosynthesis</keyword>
<comment type="function">
    <text evidence="2">GTP hydrolase that promotes the GTP-dependent binding of aminoacyl-tRNA to the A-site of ribosomes during protein biosynthesis.</text>
</comment>
<comment type="catalytic activity">
    <reaction evidence="2">
        <text>GTP + H2O = GDP + phosphate + H(+)</text>
        <dbReference type="Rhea" id="RHEA:19669"/>
        <dbReference type="ChEBI" id="CHEBI:15377"/>
        <dbReference type="ChEBI" id="CHEBI:15378"/>
        <dbReference type="ChEBI" id="CHEBI:37565"/>
        <dbReference type="ChEBI" id="CHEBI:43474"/>
        <dbReference type="ChEBI" id="CHEBI:58189"/>
        <dbReference type="EC" id="3.6.5.3"/>
    </reaction>
    <physiologicalReaction direction="left-to-right" evidence="2">
        <dbReference type="Rhea" id="RHEA:19670"/>
    </physiologicalReaction>
</comment>
<comment type="subunit">
    <text evidence="2">Monomer.</text>
</comment>
<comment type="subcellular location">
    <subcellularLocation>
        <location evidence="2">Cytoplasm</location>
    </subcellularLocation>
</comment>
<comment type="similarity">
    <text evidence="2">Belongs to the TRAFAC class translation factor GTPase superfamily. Classic translation factor GTPase family. EF-Tu/EF-1A subfamily.</text>
</comment>
<sequence>MAKQKFERTKPHVNVGTIGHVDHGKTTLTAAITKVLALQGAAQFVSYDQIDNAPEERARGITIAIRHVEYQTARRHYAHVDCPGHADYIKNMITGAAQMDGAILVVSAPDGPMPQTREHVLLARQVQVPAMVVFLNKVDMMDDEELLELVELELRELLSNHGFPGDEVPIVRGSALAALSSASTDINAPEYKCILDLMNAVDEYIPTPVREIDKPFLMPIEDVFGIKGRGTVVTGRIERGKVKMGDTVEIIGMTHEAPRRTVVTGVEMFQKTLDEGIAGDNVGVLLRGIERTEVERGQVLAAPGSIKPHATFKANVYVLKKEEGGRHTPFFSGYRPQFYIRTTDVTGAIHLPEGVEMVMPGDNIEMTVELIVPVAIEEGLRFAIREGGRTVGAGVVSAIVD</sequence>
<protein>
    <recommendedName>
        <fullName evidence="2">Elongation factor Tu 2</fullName>
        <shortName evidence="2">EF-Tu 2</shortName>
        <ecNumber evidence="2">3.6.5.3</ecNumber>
    </recommendedName>
</protein>
<name>EFTU2_ROSS1</name>
<feature type="chain" id="PRO_0000337505" description="Elongation factor Tu 2">
    <location>
        <begin position="1"/>
        <end position="401"/>
    </location>
</feature>
<feature type="domain" description="tr-type G">
    <location>
        <begin position="10"/>
        <end position="209"/>
    </location>
</feature>
<feature type="region of interest" description="G1" evidence="1">
    <location>
        <begin position="19"/>
        <end position="26"/>
    </location>
</feature>
<feature type="region of interest" description="G2" evidence="1">
    <location>
        <begin position="60"/>
        <end position="64"/>
    </location>
</feature>
<feature type="region of interest" description="G3" evidence="1">
    <location>
        <begin position="81"/>
        <end position="84"/>
    </location>
</feature>
<feature type="region of interest" description="G4" evidence="1">
    <location>
        <begin position="136"/>
        <end position="139"/>
    </location>
</feature>
<feature type="region of interest" description="G5" evidence="1">
    <location>
        <begin position="174"/>
        <end position="176"/>
    </location>
</feature>
<feature type="binding site" evidence="2">
    <location>
        <begin position="19"/>
        <end position="26"/>
    </location>
    <ligand>
        <name>GTP</name>
        <dbReference type="ChEBI" id="CHEBI:37565"/>
    </ligand>
</feature>
<feature type="binding site" evidence="2">
    <location>
        <position position="26"/>
    </location>
    <ligand>
        <name>Mg(2+)</name>
        <dbReference type="ChEBI" id="CHEBI:18420"/>
    </ligand>
</feature>
<feature type="binding site" evidence="2">
    <location>
        <begin position="81"/>
        <end position="85"/>
    </location>
    <ligand>
        <name>GTP</name>
        <dbReference type="ChEBI" id="CHEBI:37565"/>
    </ligand>
</feature>
<feature type="binding site" evidence="2">
    <location>
        <begin position="136"/>
        <end position="139"/>
    </location>
    <ligand>
        <name>GTP</name>
        <dbReference type="ChEBI" id="CHEBI:37565"/>
    </ligand>
</feature>